<dbReference type="EC" id="2.7.8.7" evidence="1"/>
<dbReference type="EMBL" id="AE000513">
    <property type="protein sequence ID" value="AAF09829.1"/>
    <property type="molecule type" value="Genomic_DNA"/>
</dbReference>
<dbReference type="PIR" id="F75544">
    <property type="entry name" value="F75544"/>
</dbReference>
<dbReference type="RefSeq" id="NP_293971.1">
    <property type="nucleotide sequence ID" value="NC_001263.1"/>
</dbReference>
<dbReference type="RefSeq" id="WP_010886893.1">
    <property type="nucleotide sequence ID" value="NC_001263.1"/>
</dbReference>
<dbReference type="SMR" id="Q9RXR0"/>
<dbReference type="FunCoup" id="Q9RXR0">
    <property type="interactions" value="112"/>
</dbReference>
<dbReference type="STRING" id="243230.DR_0247"/>
<dbReference type="PaxDb" id="243230-DR_0247"/>
<dbReference type="EnsemblBacteria" id="AAF09829">
    <property type="protein sequence ID" value="AAF09829"/>
    <property type="gene ID" value="DR_0247"/>
</dbReference>
<dbReference type="GeneID" id="69516477"/>
<dbReference type="KEGG" id="dra:DR_0247"/>
<dbReference type="PATRIC" id="fig|243230.17.peg.411"/>
<dbReference type="eggNOG" id="COG0736">
    <property type="taxonomic scope" value="Bacteria"/>
</dbReference>
<dbReference type="HOGENOM" id="CLU_089696_0_2_0"/>
<dbReference type="InParanoid" id="Q9RXR0"/>
<dbReference type="OrthoDB" id="517356at2"/>
<dbReference type="Proteomes" id="UP000002524">
    <property type="component" value="Chromosome 1"/>
</dbReference>
<dbReference type="GO" id="GO:0005737">
    <property type="term" value="C:cytoplasm"/>
    <property type="evidence" value="ECO:0007669"/>
    <property type="project" value="UniProtKB-SubCell"/>
</dbReference>
<dbReference type="GO" id="GO:0008897">
    <property type="term" value="F:holo-[acyl-carrier-protein] synthase activity"/>
    <property type="evidence" value="ECO:0007669"/>
    <property type="project" value="UniProtKB-UniRule"/>
</dbReference>
<dbReference type="GO" id="GO:0000287">
    <property type="term" value="F:magnesium ion binding"/>
    <property type="evidence" value="ECO:0007669"/>
    <property type="project" value="UniProtKB-UniRule"/>
</dbReference>
<dbReference type="GO" id="GO:0006633">
    <property type="term" value="P:fatty acid biosynthetic process"/>
    <property type="evidence" value="ECO:0007669"/>
    <property type="project" value="UniProtKB-UniRule"/>
</dbReference>
<dbReference type="Gene3D" id="3.90.470.20">
    <property type="entry name" value="4'-phosphopantetheinyl transferase domain"/>
    <property type="match status" value="1"/>
</dbReference>
<dbReference type="HAMAP" id="MF_00101">
    <property type="entry name" value="AcpS"/>
    <property type="match status" value="1"/>
</dbReference>
<dbReference type="InterPro" id="IPR008278">
    <property type="entry name" value="4-PPantetheinyl_Trfase_dom"/>
</dbReference>
<dbReference type="InterPro" id="IPR037143">
    <property type="entry name" value="4-PPantetheinyl_Trfase_dom_sf"/>
</dbReference>
<dbReference type="InterPro" id="IPR002582">
    <property type="entry name" value="ACPS"/>
</dbReference>
<dbReference type="InterPro" id="IPR004568">
    <property type="entry name" value="Ppantetheine-prot_Trfase_dom"/>
</dbReference>
<dbReference type="NCBIfam" id="TIGR00556">
    <property type="entry name" value="pantethn_trn"/>
    <property type="match status" value="1"/>
</dbReference>
<dbReference type="NCBIfam" id="NF011256">
    <property type="entry name" value="PRK14662.1"/>
    <property type="match status" value="1"/>
</dbReference>
<dbReference type="Pfam" id="PF01648">
    <property type="entry name" value="ACPS"/>
    <property type="match status" value="1"/>
</dbReference>
<dbReference type="SUPFAM" id="SSF56214">
    <property type="entry name" value="4'-phosphopantetheinyl transferase"/>
    <property type="match status" value="1"/>
</dbReference>
<evidence type="ECO:0000255" key="1">
    <source>
        <dbReference type="HAMAP-Rule" id="MF_00101"/>
    </source>
</evidence>
<reference key="1">
    <citation type="journal article" date="1999" name="Science">
        <title>Genome sequence of the radioresistant bacterium Deinococcus radiodurans R1.</title>
        <authorList>
            <person name="White O."/>
            <person name="Eisen J.A."/>
            <person name="Heidelberg J.F."/>
            <person name="Hickey E.K."/>
            <person name="Peterson J.D."/>
            <person name="Dodson R.J."/>
            <person name="Haft D.H."/>
            <person name="Gwinn M.L."/>
            <person name="Nelson W.C."/>
            <person name="Richardson D.L."/>
            <person name="Moffat K.S."/>
            <person name="Qin H."/>
            <person name="Jiang L."/>
            <person name="Pamphile W."/>
            <person name="Crosby M."/>
            <person name="Shen M."/>
            <person name="Vamathevan J.J."/>
            <person name="Lam P."/>
            <person name="McDonald L.A."/>
            <person name="Utterback T.R."/>
            <person name="Zalewski C."/>
            <person name="Makarova K.S."/>
            <person name="Aravind L."/>
            <person name="Daly M.J."/>
            <person name="Minton K.W."/>
            <person name="Fleischmann R.D."/>
            <person name="Ketchum K.A."/>
            <person name="Nelson K.E."/>
            <person name="Salzberg S.L."/>
            <person name="Smith H.O."/>
            <person name="Venter J.C."/>
            <person name="Fraser C.M."/>
        </authorList>
    </citation>
    <scope>NUCLEOTIDE SEQUENCE [LARGE SCALE GENOMIC DNA]</scope>
    <source>
        <strain>ATCC 13939 / DSM 20539 / JCM 16871 / CCUG 27074 / LMG 4051 / NBRC 15346 / NCIMB 9279 / VKM B-1422 / R1</strain>
    </source>
</reference>
<name>ACPS_DEIRA</name>
<sequence length="133" mass="15114">MIVAVGHDLIEIARIRRMLEREGVRAERLFTATELAYAGRYRDPAPSLAARFAAKEAFQKVWLRPHGWRDVWVERERTPDGPFPYAAPMLGFAPAIAGEMHERGWVAHLTLTHTREHASAVVILEHLEQRAAP</sequence>
<protein>
    <recommendedName>
        <fullName evidence="1">Holo-[acyl-carrier-protein] synthase</fullName>
        <shortName evidence="1">Holo-ACP synthase</shortName>
        <ecNumber evidence="1">2.7.8.7</ecNumber>
    </recommendedName>
    <alternativeName>
        <fullName evidence="1">4'-phosphopantetheinyl transferase AcpS</fullName>
    </alternativeName>
</protein>
<organism>
    <name type="scientific">Deinococcus radiodurans (strain ATCC 13939 / DSM 20539 / JCM 16871 / CCUG 27074 / LMG 4051 / NBRC 15346 / NCIMB 9279 / VKM B-1422 / R1)</name>
    <dbReference type="NCBI Taxonomy" id="243230"/>
    <lineage>
        <taxon>Bacteria</taxon>
        <taxon>Thermotogati</taxon>
        <taxon>Deinococcota</taxon>
        <taxon>Deinococci</taxon>
        <taxon>Deinococcales</taxon>
        <taxon>Deinococcaceae</taxon>
        <taxon>Deinococcus</taxon>
    </lineage>
</organism>
<keyword id="KW-0963">Cytoplasm</keyword>
<keyword id="KW-0275">Fatty acid biosynthesis</keyword>
<keyword id="KW-0276">Fatty acid metabolism</keyword>
<keyword id="KW-0444">Lipid biosynthesis</keyword>
<keyword id="KW-0443">Lipid metabolism</keyword>
<keyword id="KW-0460">Magnesium</keyword>
<keyword id="KW-0479">Metal-binding</keyword>
<keyword id="KW-1185">Reference proteome</keyword>
<keyword id="KW-0808">Transferase</keyword>
<accession>Q9RXR0</accession>
<gene>
    <name evidence="1" type="primary">acpS</name>
    <name type="ordered locus">DR_0247</name>
</gene>
<comment type="function">
    <text evidence="1">Transfers the 4'-phosphopantetheine moiety from coenzyme A to a Ser of acyl-carrier-protein.</text>
</comment>
<comment type="catalytic activity">
    <reaction evidence="1">
        <text>apo-[ACP] + CoA = holo-[ACP] + adenosine 3',5'-bisphosphate + H(+)</text>
        <dbReference type="Rhea" id="RHEA:12068"/>
        <dbReference type="Rhea" id="RHEA-COMP:9685"/>
        <dbReference type="Rhea" id="RHEA-COMP:9690"/>
        <dbReference type="ChEBI" id="CHEBI:15378"/>
        <dbReference type="ChEBI" id="CHEBI:29999"/>
        <dbReference type="ChEBI" id="CHEBI:57287"/>
        <dbReference type="ChEBI" id="CHEBI:58343"/>
        <dbReference type="ChEBI" id="CHEBI:64479"/>
        <dbReference type="EC" id="2.7.8.7"/>
    </reaction>
</comment>
<comment type="cofactor">
    <cofactor evidence="1">
        <name>Mg(2+)</name>
        <dbReference type="ChEBI" id="CHEBI:18420"/>
    </cofactor>
</comment>
<comment type="subcellular location">
    <subcellularLocation>
        <location evidence="1">Cytoplasm</location>
    </subcellularLocation>
</comment>
<comment type="similarity">
    <text evidence="1">Belongs to the P-Pant transferase superfamily. AcpS family.</text>
</comment>
<feature type="chain" id="PRO_0000175641" description="Holo-[acyl-carrier-protein] synthase">
    <location>
        <begin position="1"/>
        <end position="133"/>
    </location>
</feature>
<feature type="binding site" evidence="1">
    <location>
        <position position="8"/>
    </location>
    <ligand>
        <name>Mg(2+)</name>
        <dbReference type="ChEBI" id="CHEBI:18420"/>
    </ligand>
</feature>
<feature type="binding site" evidence="1">
    <location>
        <position position="56"/>
    </location>
    <ligand>
        <name>Mg(2+)</name>
        <dbReference type="ChEBI" id="CHEBI:18420"/>
    </ligand>
</feature>
<proteinExistence type="inferred from homology"/>